<proteinExistence type="inferred from homology"/>
<accession>Q97BX6</accession>
<sequence length="255" mass="27651">MNTKVPIYSINGEKRGEIDLPEIFNYSVREDLIRKAFRAISLSLRQPYGSSPLAGLRRVGHTTKPGLGISRMPRIAGGSRVVGIASAVGGKSAHSPRSTKKLYVGINEKERKMAKFSAIAMTASADAVRKRGHRFSESLPLPVVVEDAVSGIKKTKDAVNLLKSIGLYEDILRSKEGKHIRAGRGKMRNRRYKVPKSLLIVGTDSVSLKVFKSLPGVDVASMDSLSIRKLAPGGVGGRLTVYTESAIEKLREANA</sequence>
<name>RL4_THEVO</name>
<comment type="function">
    <text evidence="1">One of the primary rRNA binding proteins, this protein initially binds near the 5'-end of the 23S rRNA. It is important during the early stages of 50S assembly. It makes multiple contacts with different domains of the 23S rRNA in the assembled 50S subunit and ribosome.</text>
</comment>
<comment type="function">
    <text evidence="1">Forms part of the polypeptide exit tunnel.</text>
</comment>
<comment type="subunit">
    <text evidence="1">Part of the 50S ribosomal subunit.</text>
</comment>
<comment type="similarity">
    <text evidence="1">Belongs to the universal ribosomal protein uL4 family.</text>
</comment>
<reference key="1">
    <citation type="journal article" date="2000" name="Proc. Natl. Acad. Sci. U.S.A.">
        <title>Archaeal adaptation to higher temperatures revealed by genomic sequence of Thermoplasma volcanium.</title>
        <authorList>
            <person name="Kawashima T."/>
            <person name="Amano N."/>
            <person name="Koike H."/>
            <person name="Makino S."/>
            <person name="Higuchi S."/>
            <person name="Kawashima-Ohya Y."/>
            <person name="Watanabe K."/>
            <person name="Yamazaki M."/>
            <person name="Kanehori K."/>
            <person name="Kawamoto T."/>
            <person name="Nunoshiba T."/>
            <person name="Yamamoto Y."/>
            <person name="Aramaki H."/>
            <person name="Makino K."/>
            <person name="Suzuki M."/>
        </authorList>
    </citation>
    <scope>NUCLEOTIDE SEQUENCE [LARGE SCALE GENOMIC DNA]</scope>
    <source>
        <strain>ATCC 51530 / DSM 4299 / JCM 9571 / NBRC 15438 / GSS1</strain>
    </source>
</reference>
<protein>
    <recommendedName>
        <fullName evidence="1">Large ribosomal subunit protein uL4</fullName>
    </recommendedName>
    <alternativeName>
        <fullName evidence="2">50S ribosomal protein L4</fullName>
    </alternativeName>
</protein>
<gene>
    <name evidence="1" type="primary">rpl4</name>
    <name type="ordered locus">TV0329</name>
    <name type="ORF">TVG0333990</name>
</gene>
<organism>
    <name type="scientific">Thermoplasma volcanium (strain ATCC 51530 / DSM 4299 / JCM 9571 / NBRC 15438 / GSS1)</name>
    <dbReference type="NCBI Taxonomy" id="273116"/>
    <lineage>
        <taxon>Archaea</taxon>
        <taxon>Methanobacteriati</taxon>
        <taxon>Thermoplasmatota</taxon>
        <taxon>Thermoplasmata</taxon>
        <taxon>Thermoplasmatales</taxon>
        <taxon>Thermoplasmataceae</taxon>
        <taxon>Thermoplasma</taxon>
    </lineage>
</organism>
<evidence type="ECO:0000255" key="1">
    <source>
        <dbReference type="HAMAP-Rule" id="MF_01328"/>
    </source>
</evidence>
<evidence type="ECO:0000305" key="2"/>
<feature type="chain" id="PRO_0000129347" description="Large ribosomal subunit protein uL4">
    <location>
        <begin position="1"/>
        <end position="255"/>
    </location>
</feature>
<dbReference type="EMBL" id="BA000011">
    <property type="protein sequence ID" value="BAB59471.1"/>
    <property type="molecule type" value="Genomic_DNA"/>
</dbReference>
<dbReference type="SMR" id="Q97BX6"/>
<dbReference type="STRING" id="273116.gene:9381106"/>
<dbReference type="PaxDb" id="273116-14324544"/>
<dbReference type="KEGG" id="tvo:TVG0333990"/>
<dbReference type="eggNOG" id="arCOG04071">
    <property type="taxonomic scope" value="Archaea"/>
</dbReference>
<dbReference type="HOGENOM" id="CLU_026535_0_0_2"/>
<dbReference type="OrthoDB" id="10737at2157"/>
<dbReference type="PhylomeDB" id="Q97BX6"/>
<dbReference type="Proteomes" id="UP000001017">
    <property type="component" value="Chromosome"/>
</dbReference>
<dbReference type="GO" id="GO:1990904">
    <property type="term" value="C:ribonucleoprotein complex"/>
    <property type="evidence" value="ECO:0007669"/>
    <property type="project" value="UniProtKB-KW"/>
</dbReference>
<dbReference type="GO" id="GO:0005840">
    <property type="term" value="C:ribosome"/>
    <property type="evidence" value="ECO:0007669"/>
    <property type="project" value="UniProtKB-KW"/>
</dbReference>
<dbReference type="GO" id="GO:0019843">
    <property type="term" value="F:rRNA binding"/>
    <property type="evidence" value="ECO:0007669"/>
    <property type="project" value="UniProtKB-UniRule"/>
</dbReference>
<dbReference type="GO" id="GO:0003735">
    <property type="term" value="F:structural constituent of ribosome"/>
    <property type="evidence" value="ECO:0007669"/>
    <property type="project" value="InterPro"/>
</dbReference>
<dbReference type="GO" id="GO:0006412">
    <property type="term" value="P:translation"/>
    <property type="evidence" value="ECO:0007669"/>
    <property type="project" value="UniProtKB-UniRule"/>
</dbReference>
<dbReference type="Gene3D" id="3.40.1370.10">
    <property type="match status" value="1"/>
</dbReference>
<dbReference type="HAMAP" id="MF_01328_A">
    <property type="entry name" value="Ribosomal_uL4_A"/>
    <property type="match status" value="1"/>
</dbReference>
<dbReference type="InterPro" id="IPR002136">
    <property type="entry name" value="Ribosomal_uL4"/>
</dbReference>
<dbReference type="InterPro" id="IPR023574">
    <property type="entry name" value="Ribosomal_uL4_dom_sf"/>
</dbReference>
<dbReference type="InterPro" id="IPR013000">
    <property type="entry name" value="Ribosomal_uL4_euk/arc_CS"/>
</dbReference>
<dbReference type="InterPro" id="IPR045240">
    <property type="entry name" value="Ribosomal_uL4_euk/arch"/>
</dbReference>
<dbReference type="InterPro" id="IPR019970">
    <property type="entry name" value="Ribosomall_uL4-arc"/>
</dbReference>
<dbReference type="NCBIfam" id="TIGR03672">
    <property type="entry name" value="rpl4p_arch"/>
    <property type="match status" value="1"/>
</dbReference>
<dbReference type="PANTHER" id="PTHR19431">
    <property type="entry name" value="60S RIBOSOMAL PROTEIN L4"/>
    <property type="match status" value="1"/>
</dbReference>
<dbReference type="Pfam" id="PF00573">
    <property type="entry name" value="Ribosomal_L4"/>
    <property type="match status" value="1"/>
</dbReference>
<dbReference type="SUPFAM" id="SSF52166">
    <property type="entry name" value="Ribosomal protein L4"/>
    <property type="match status" value="1"/>
</dbReference>
<dbReference type="PROSITE" id="PS00939">
    <property type="entry name" value="RIBOSOMAL_L1E"/>
    <property type="match status" value="1"/>
</dbReference>
<keyword id="KW-0687">Ribonucleoprotein</keyword>
<keyword id="KW-0689">Ribosomal protein</keyword>
<keyword id="KW-0694">RNA-binding</keyword>
<keyword id="KW-0699">rRNA-binding</keyword>